<gene>
    <name type="ordered locus">Mal-087</name>
    <name type="ORF">9RL</name>
    <name type="ORF">L09RL</name>
</gene>
<feature type="chain" id="PRO_0000373702" description="Protein B602L">
    <location>
        <begin position="1"/>
        <end position="614"/>
    </location>
</feature>
<feature type="repeat" description="1">
    <location>
        <begin position="161"/>
        <end position="164"/>
    </location>
</feature>
<feature type="repeat" description="2">
    <location>
        <begin position="165"/>
        <end position="168"/>
    </location>
</feature>
<feature type="repeat" description="3">
    <location>
        <begin position="169"/>
        <end position="172"/>
    </location>
</feature>
<feature type="repeat" description="4">
    <location>
        <begin position="173"/>
        <end position="176"/>
    </location>
</feature>
<feature type="repeat" description="5">
    <location>
        <begin position="177"/>
        <end position="180"/>
    </location>
</feature>
<feature type="repeat" description="6">
    <location>
        <begin position="181"/>
        <end position="184"/>
    </location>
</feature>
<feature type="repeat" description="7">
    <location>
        <begin position="185"/>
        <end position="188"/>
    </location>
</feature>
<feature type="repeat" description="8">
    <location>
        <begin position="189"/>
        <end position="192"/>
    </location>
</feature>
<feature type="repeat" description="9">
    <location>
        <begin position="193"/>
        <end position="196"/>
    </location>
</feature>
<feature type="repeat" description="10">
    <location>
        <begin position="197"/>
        <end position="200"/>
    </location>
</feature>
<feature type="repeat" description="11">
    <location>
        <begin position="201"/>
        <end position="204"/>
    </location>
</feature>
<feature type="repeat" description="12">
    <location>
        <begin position="205"/>
        <end position="208"/>
    </location>
</feature>
<feature type="repeat" description="13">
    <location>
        <begin position="209"/>
        <end position="212"/>
    </location>
</feature>
<feature type="repeat" description="14">
    <location>
        <begin position="213"/>
        <end position="216"/>
    </location>
</feature>
<feature type="repeat" description="15">
    <location>
        <begin position="217"/>
        <end position="220"/>
    </location>
</feature>
<feature type="repeat" description="16">
    <location>
        <begin position="221"/>
        <end position="224"/>
    </location>
</feature>
<feature type="repeat" description="17">
    <location>
        <begin position="225"/>
        <end position="228"/>
    </location>
</feature>
<feature type="repeat" description="18">
    <location>
        <begin position="229"/>
        <end position="232"/>
    </location>
</feature>
<feature type="repeat" description="19">
    <location>
        <begin position="233"/>
        <end position="236"/>
    </location>
</feature>
<feature type="repeat" description="20">
    <location>
        <begin position="237"/>
        <end position="240"/>
    </location>
</feature>
<feature type="repeat" description="21">
    <location>
        <begin position="241"/>
        <end position="244"/>
    </location>
</feature>
<feature type="repeat" description="22">
    <location>
        <begin position="245"/>
        <end position="248"/>
    </location>
</feature>
<feature type="repeat" description="23">
    <location>
        <begin position="249"/>
        <end position="252"/>
    </location>
</feature>
<feature type="repeat" description="24">
    <location>
        <begin position="253"/>
        <end position="256"/>
    </location>
</feature>
<feature type="repeat" description="25">
    <location>
        <begin position="257"/>
        <end position="260"/>
    </location>
</feature>
<feature type="repeat" description="26">
    <location>
        <begin position="261"/>
        <end position="264"/>
    </location>
</feature>
<feature type="repeat" description="27">
    <location>
        <begin position="265"/>
        <end position="268"/>
    </location>
</feature>
<feature type="repeat" description="28">
    <location>
        <begin position="269"/>
        <end position="272"/>
    </location>
</feature>
<feature type="repeat" description="28">
    <location>
        <begin position="273"/>
        <end position="276"/>
    </location>
</feature>
<feature type="repeat" description="28">
    <location>
        <begin position="277"/>
        <end position="280"/>
    </location>
</feature>
<feature type="repeat" description="28">
    <location>
        <begin position="281"/>
        <end position="284"/>
    </location>
</feature>
<feature type="region of interest" description="28 X 4 AA tandem repeats of [CNS]-[AV]-[DNS]-[IT]">
    <location>
        <begin position="161"/>
        <end position="284"/>
    </location>
</feature>
<accession>Q8V9S9</accession>
<proteinExistence type="inferred from homology"/>
<name>VF602_ASFM2</name>
<dbReference type="EMBL" id="L00966">
    <property type="protein sequence ID" value="AAL31335.1"/>
    <property type="molecule type" value="Genomic_DNA"/>
</dbReference>
<dbReference type="EMBL" id="AY261361">
    <property type="status" value="NOT_ANNOTATED_CDS"/>
    <property type="molecule type" value="Genomic_DNA"/>
</dbReference>
<dbReference type="Proteomes" id="UP000000860">
    <property type="component" value="Segment"/>
</dbReference>
<dbReference type="GO" id="GO:0030430">
    <property type="term" value="C:host cell cytoplasm"/>
    <property type="evidence" value="ECO:0007669"/>
    <property type="project" value="UniProtKB-SubCell"/>
</dbReference>
<dbReference type="InterPro" id="IPR050972">
    <property type="entry name" value="SDr-like"/>
</dbReference>
<dbReference type="PANTHER" id="PTHR34403">
    <property type="entry name" value="TOL-PAL SYSTEM PROTEIN TOLA"/>
    <property type="match status" value="1"/>
</dbReference>
<dbReference type="PANTHER" id="PTHR34403:SF8">
    <property type="entry name" value="TOL-PAL SYSTEM PROTEIN TOLA"/>
    <property type="match status" value="1"/>
</dbReference>
<protein>
    <recommendedName>
        <fullName>Protein B602L</fullName>
        <shortName>pB602L</shortName>
    </recommendedName>
</protein>
<sequence length="614" mass="69403">MAEFNIDELLKNVLEDPSTEISEETLKQLYQRTNPYKQFKNDSRVAFCSFTNLREQYIRRLIMTSLIGYVFKALQEWMPSYSKPTHTTKTLLSELITLVDTLKQETNDVPSESVVNTILAIADSCKTQTQKSKEAKTTIDSFLREHFVFDPNLHAQSAYTCASTNADTSASTNADTSASTNASINADTNVDTCASTNASTNVDTNASINASTNASTNVDTNASTNASINADTNVDTCASTNASTNVDTNASINASTNASTNVDTNADINANTNADINANINANTEYTDLTDPERIPLHIMQKTLNVPNELQADIDAITQTPQGYRAAAHILQNIELHQSVKHMLENPRAFKPILFNTKITRYLSQHIPPQDTFYKWNYYIEDNYEELRAATESIYPEKPDLEFAFIIYDVVDSSNQQKIDEFYYKYKDQIFSEVSSIQLGNWTLLGSFKANRERYNYFNQNNEVIKRILDRHEEDLKIGKEILRNTIYHKKAKNIQETGPDAPGLSIYNSTFHTDSGIKGLLSFKELKNLEKASGNVKKAREYDFIDECEEKIKQLLSKENLTSDEKSELIKTKKQLDNALEMLNVPDDTIRVDMWVNNNNKLEKEILYTKAEL</sequence>
<evidence type="ECO:0000250" key="1">
    <source>
        <dbReference type="UniProtKB" id="Q65169"/>
    </source>
</evidence>
<evidence type="ECO:0000305" key="2"/>
<organism>
    <name type="scientific">African swine fever virus (isolate Tick/Malawi/Lil 20-1/1983)</name>
    <name type="common">ASFV</name>
    <dbReference type="NCBI Taxonomy" id="10500"/>
    <lineage>
        <taxon>Viruses</taxon>
        <taxon>Varidnaviria</taxon>
        <taxon>Bamfordvirae</taxon>
        <taxon>Nucleocytoviricota</taxon>
        <taxon>Pokkesviricetes</taxon>
        <taxon>Asfuvirales</taxon>
        <taxon>Asfarviridae</taxon>
        <taxon>Asfivirus</taxon>
        <taxon>African swine fever virus</taxon>
    </lineage>
</organism>
<comment type="function">
    <text evidence="1">Plays an essential role in the assembly of the icosahedral capsid of the virus (By similarity). Allows the assembly of 3 molecules of hexon protein p72 and formation of a thermostable trimer (By similarity).</text>
</comment>
<comment type="subcellular location">
    <subcellularLocation>
        <location evidence="1">Host cytoplasm</location>
    </subcellularLocation>
</comment>
<comment type="induction">
    <text evidence="2">Expressed in the late phase of the viral replicative cycle.</text>
</comment>
<comment type="similarity">
    <text evidence="2">Belongs to the asfivirus B602L family.</text>
</comment>
<organismHost>
    <name type="scientific">Ornithodoros</name>
    <name type="common">relapsing fever ticks</name>
    <dbReference type="NCBI Taxonomy" id="6937"/>
</organismHost>
<organismHost>
    <name type="scientific">Phacochoerus aethiopicus</name>
    <name type="common">Warthog</name>
    <dbReference type="NCBI Taxonomy" id="85517"/>
</organismHost>
<organismHost>
    <name type="scientific">Phacochoerus africanus</name>
    <name type="common">Warthog</name>
    <dbReference type="NCBI Taxonomy" id="41426"/>
</organismHost>
<organismHost>
    <name type="scientific">Potamochoerus larvatus</name>
    <name type="common">Bushpig</name>
    <dbReference type="NCBI Taxonomy" id="273792"/>
</organismHost>
<organismHost>
    <name type="scientific">Sus scrofa</name>
    <name type="common">Pig</name>
    <dbReference type="NCBI Taxonomy" id="9823"/>
</organismHost>
<reference key="1">
    <citation type="submission" date="2001-11" db="EMBL/GenBank/DDBJ databases">
        <title>Nucleotide sequence and analysis of 16.25 kilobase pairs of the African swine fever virus genome that span the central variable region.</title>
        <authorList>
            <person name="Roberts P.C."/>
            <person name="Lu Z."/>
            <person name="Rock D.L."/>
        </authorList>
    </citation>
    <scope>NUCLEOTIDE SEQUENCE [GENOMIC DNA]</scope>
</reference>
<reference key="2">
    <citation type="submission" date="2003-03" db="EMBL/GenBank/DDBJ databases">
        <title>African swine fever virus genomes.</title>
        <authorList>
            <person name="Kutish G.F."/>
            <person name="Rock D.L."/>
        </authorList>
    </citation>
    <scope>NUCLEOTIDE SEQUENCE [LARGE SCALE GENOMIC DNA]</scope>
</reference>
<keyword id="KW-1035">Host cytoplasm</keyword>
<keyword id="KW-0426">Late protein</keyword>
<keyword id="KW-0677">Repeat</keyword>